<organism>
    <name type="scientific">Staphylococcus aureus (strain NCTC 8325 / PS 47)</name>
    <dbReference type="NCBI Taxonomy" id="93061"/>
    <lineage>
        <taxon>Bacteria</taxon>
        <taxon>Bacillati</taxon>
        <taxon>Bacillota</taxon>
        <taxon>Bacilli</taxon>
        <taxon>Bacillales</taxon>
        <taxon>Staphylococcaceae</taxon>
        <taxon>Staphylococcus</taxon>
    </lineage>
</organism>
<reference key="1">
    <citation type="book" date="2006" name="Gram positive pathogens, 2nd edition">
        <title>The Staphylococcus aureus NCTC 8325 genome.</title>
        <editorList>
            <person name="Fischetti V."/>
            <person name="Novick R."/>
            <person name="Ferretti J."/>
            <person name="Portnoy D."/>
            <person name="Rood J."/>
        </editorList>
        <authorList>
            <person name="Gillaspy A.F."/>
            <person name="Worrell V."/>
            <person name="Orvis J."/>
            <person name="Roe B.A."/>
            <person name="Dyer D.W."/>
            <person name="Iandolo J.J."/>
        </authorList>
    </citation>
    <scope>NUCLEOTIDE SEQUENCE [LARGE SCALE GENOMIC DNA]</scope>
    <source>
        <strain>NCTC 8325 / PS 47</strain>
    </source>
</reference>
<comment type="catalytic activity">
    <reaction>
        <text>a primary alcohol + NAD(+) = an aldehyde + NADH + H(+)</text>
        <dbReference type="Rhea" id="RHEA:10736"/>
        <dbReference type="ChEBI" id="CHEBI:15378"/>
        <dbReference type="ChEBI" id="CHEBI:15734"/>
        <dbReference type="ChEBI" id="CHEBI:17478"/>
        <dbReference type="ChEBI" id="CHEBI:57540"/>
        <dbReference type="ChEBI" id="CHEBI:57945"/>
        <dbReference type="EC" id="1.1.1.1"/>
    </reaction>
</comment>
<comment type="catalytic activity">
    <reaction>
        <text>a secondary alcohol + NAD(+) = a ketone + NADH + H(+)</text>
        <dbReference type="Rhea" id="RHEA:10740"/>
        <dbReference type="ChEBI" id="CHEBI:15378"/>
        <dbReference type="ChEBI" id="CHEBI:17087"/>
        <dbReference type="ChEBI" id="CHEBI:35681"/>
        <dbReference type="ChEBI" id="CHEBI:57540"/>
        <dbReference type="ChEBI" id="CHEBI:57945"/>
        <dbReference type="EC" id="1.1.1.1"/>
    </reaction>
</comment>
<comment type="cofactor">
    <cofactor evidence="1">
        <name>Zn(2+)</name>
        <dbReference type="ChEBI" id="CHEBI:29105"/>
    </cofactor>
    <text evidence="1">Binds 2 Zn(2+) ions per subunit.</text>
</comment>
<comment type="similarity">
    <text evidence="2">Belongs to the zinc-containing alcohol dehydrogenase family.</text>
</comment>
<gene>
    <name type="primary">adh</name>
    <name type="ordered locus">SAOUHSC_00608</name>
</gene>
<keyword id="KW-0479">Metal-binding</keyword>
<keyword id="KW-0520">NAD</keyword>
<keyword id="KW-0560">Oxidoreductase</keyword>
<keyword id="KW-1185">Reference proteome</keyword>
<keyword id="KW-0862">Zinc</keyword>
<protein>
    <recommendedName>
        <fullName>Alcohol dehydrogenase</fullName>
        <shortName>ADH</shortName>
        <ecNumber>1.1.1.1</ecNumber>
    </recommendedName>
</protein>
<proteinExistence type="inferred from homology"/>
<name>ADH_STAA8</name>
<evidence type="ECO:0000250" key="1"/>
<evidence type="ECO:0000305" key="2"/>
<sequence>MRAAVVTKDHKVSIEDKKLRALKPGEALVQTEYCGVCHTDLHVKNADFGDVTGVTLGHEGIGKVIEVAEDVESLKIGDRVSIAWMFESCGRCEYCTTGRETLCRSVKNAGYTVDGAMAEQVIVTADYAVKVPEKLDPAAASSITCAGVTTYKAVKVSNVKPGQWLGVFGIGGLGNLALQYAKNVMGAKIVAFDINDDKLAFAKELGADAIINSKDVDPVAEVMKLTDNKGLDATVVTSVAKTPFNQAVDVVKAGARVVAVGLPVDKMNLDIPRLVLDGIEVVGSLVGTRQDLREAFEFAAENKVTPKVQLRKLEEINDIFEEMENGTITGRMVIKF</sequence>
<dbReference type="EC" id="1.1.1.1"/>
<dbReference type="EMBL" id="CP000253">
    <property type="protein sequence ID" value="ABD29746.1"/>
    <property type="molecule type" value="Genomic_DNA"/>
</dbReference>
<dbReference type="RefSeq" id="YP_499171.1">
    <property type="nucleotide sequence ID" value="NC_007795.1"/>
</dbReference>
<dbReference type="SMR" id="Q2G0G1"/>
<dbReference type="STRING" id="93061.SAOUHSC_00608"/>
<dbReference type="PaxDb" id="1280-SAXN108_0671"/>
<dbReference type="GeneID" id="3918927"/>
<dbReference type="KEGG" id="sao:SAOUHSC_00608"/>
<dbReference type="PATRIC" id="fig|93061.5.peg.545"/>
<dbReference type="eggNOG" id="COG1064">
    <property type="taxonomic scope" value="Bacteria"/>
</dbReference>
<dbReference type="HOGENOM" id="CLU_026673_20_1_9"/>
<dbReference type="OrthoDB" id="9806940at2"/>
<dbReference type="PRO" id="PR:Q2G0G1"/>
<dbReference type="Proteomes" id="UP000008816">
    <property type="component" value="Chromosome"/>
</dbReference>
<dbReference type="GO" id="GO:0004022">
    <property type="term" value="F:alcohol dehydrogenase (NAD+) activity"/>
    <property type="evidence" value="ECO:0000318"/>
    <property type="project" value="GO_Central"/>
</dbReference>
<dbReference type="GO" id="GO:0008270">
    <property type="term" value="F:zinc ion binding"/>
    <property type="evidence" value="ECO:0007669"/>
    <property type="project" value="InterPro"/>
</dbReference>
<dbReference type="GO" id="GO:0046187">
    <property type="term" value="P:acetaldehyde catabolic process"/>
    <property type="evidence" value="ECO:0000318"/>
    <property type="project" value="GO_Central"/>
</dbReference>
<dbReference type="CDD" id="cd08297">
    <property type="entry name" value="CAD3"/>
    <property type="match status" value="1"/>
</dbReference>
<dbReference type="FunFam" id="3.40.50.720:FF:000039">
    <property type="entry name" value="Alcohol dehydrogenase AdhP"/>
    <property type="match status" value="1"/>
</dbReference>
<dbReference type="Gene3D" id="3.90.180.10">
    <property type="entry name" value="Medium-chain alcohol dehydrogenases, catalytic domain"/>
    <property type="match status" value="1"/>
</dbReference>
<dbReference type="Gene3D" id="3.40.50.720">
    <property type="entry name" value="NAD(P)-binding Rossmann-like Domain"/>
    <property type="match status" value="1"/>
</dbReference>
<dbReference type="InterPro" id="IPR013149">
    <property type="entry name" value="ADH-like_C"/>
</dbReference>
<dbReference type="InterPro" id="IPR013154">
    <property type="entry name" value="ADH-like_N"/>
</dbReference>
<dbReference type="InterPro" id="IPR002328">
    <property type="entry name" value="ADH_Zn_CS"/>
</dbReference>
<dbReference type="InterPro" id="IPR029752">
    <property type="entry name" value="D-isomer_DH_CS1"/>
</dbReference>
<dbReference type="InterPro" id="IPR011032">
    <property type="entry name" value="GroES-like_sf"/>
</dbReference>
<dbReference type="InterPro" id="IPR036291">
    <property type="entry name" value="NAD(P)-bd_dom_sf"/>
</dbReference>
<dbReference type="InterPro" id="IPR020843">
    <property type="entry name" value="PKS_ER"/>
</dbReference>
<dbReference type="NCBIfam" id="NF006940">
    <property type="entry name" value="PRK09422.1"/>
    <property type="match status" value="1"/>
</dbReference>
<dbReference type="PANTHER" id="PTHR42940">
    <property type="entry name" value="ALCOHOL DEHYDROGENASE 1-RELATED"/>
    <property type="match status" value="1"/>
</dbReference>
<dbReference type="PANTHER" id="PTHR42940:SF8">
    <property type="entry name" value="VACUOLAR PROTEIN SORTING-ASSOCIATED PROTEIN 11"/>
    <property type="match status" value="1"/>
</dbReference>
<dbReference type="Pfam" id="PF08240">
    <property type="entry name" value="ADH_N"/>
    <property type="match status" value="1"/>
</dbReference>
<dbReference type="Pfam" id="PF00107">
    <property type="entry name" value="ADH_zinc_N"/>
    <property type="match status" value="1"/>
</dbReference>
<dbReference type="SMART" id="SM00829">
    <property type="entry name" value="PKS_ER"/>
    <property type="match status" value="1"/>
</dbReference>
<dbReference type="SUPFAM" id="SSF50129">
    <property type="entry name" value="GroES-like"/>
    <property type="match status" value="1"/>
</dbReference>
<dbReference type="SUPFAM" id="SSF51735">
    <property type="entry name" value="NAD(P)-binding Rossmann-fold domains"/>
    <property type="match status" value="1"/>
</dbReference>
<dbReference type="PROSITE" id="PS00059">
    <property type="entry name" value="ADH_ZINC"/>
    <property type="match status" value="1"/>
</dbReference>
<feature type="chain" id="PRO_0000273033" description="Alcohol dehydrogenase">
    <location>
        <begin position="1"/>
        <end position="336"/>
    </location>
</feature>
<feature type="binding site" evidence="1">
    <location>
        <position position="37"/>
    </location>
    <ligand>
        <name>Zn(2+)</name>
        <dbReference type="ChEBI" id="CHEBI:29105"/>
        <label>1</label>
        <note>catalytic</note>
    </ligand>
</feature>
<feature type="binding site" evidence="1">
    <location>
        <position position="58"/>
    </location>
    <ligand>
        <name>Zn(2+)</name>
        <dbReference type="ChEBI" id="CHEBI:29105"/>
        <label>1</label>
        <note>catalytic</note>
    </ligand>
</feature>
<feature type="binding site" evidence="1">
    <location>
        <position position="89"/>
    </location>
    <ligand>
        <name>Zn(2+)</name>
        <dbReference type="ChEBI" id="CHEBI:29105"/>
        <label>2</label>
    </ligand>
</feature>
<feature type="binding site" evidence="1">
    <location>
        <position position="92"/>
    </location>
    <ligand>
        <name>Zn(2+)</name>
        <dbReference type="ChEBI" id="CHEBI:29105"/>
        <label>2</label>
    </ligand>
</feature>
<feature type="binding site" evidence="1">
    <location>
        <position position="95"/>
    </location>
    <ligand>
        <name>Zn(2+)</name>
        <dbReference type="ChEBI" id="CHEBI:29105"/>
        <label>2</label>
    </ligand>
</feature>
<feature type="binding site" evidence="1">
    <location>
        <position position="103"/>
    </location>
    <ligand>
        <name>Zn(2+)</name>
        <dbReference type="ChEBI" id="CHEBI:29105"/>
        <label>2</label>
    </ligand>
</feature>
<feature type="binding site" evidence="1">
    <location>
        <position position="145"/>
    </location>
    <ligand>
        <name>Zn(2+)</name>
        <dbReference type="ChEBI" id="CHEBI:29105"/>
        <label>1</label>
        <note>catalytic</note>
    </ligand>
</feature>
<accession>Q2G0G1</accession>